<feature type="chain" id="PRO_0000326224" description="Aldo-keto reductase family 1 member C23">
    <location>
        <begin position="1"/>
        <end position="322"/>
    </location>
</feature>
<feature type="active site" description="Proton donor" evidence="1">
    <location>
        <position position="55"/>
    </location>
</feature>
<feature type="binding site" evidence="1">
    <location>
        <begin position="20"/>
        <end position="24"/>
    </location>
    <ligand>
        <name>NADP(+)</name>
        <dbReference type="ChEBI" id="CHEBI:58349"/>
    </ligand>
</feature>
<feature type="binding site" evidence="1">
    <location>
        <position position="31"/>
    </location>
    <ligand>
        <name>substrate</name>
    </ligand>
</feature>
<feature type="binding site" evidence="1">
    <location>
        <position position="50"/>
    </location>
    <ligand>
        <name>NADP(+)</name>
        <dbReference type="ChEBI" id="CHEBI:58349"/>
    </ligand>
</feature>
<feature type="binding site" evidence="1">
    <location>
        <position position="117"/>
    </location>
    <ligand>
        <name>substrate</name>
    </ligand>
</feature>
<feature type="binding site" evidence="1">
    <location>
        <begin position="166"/>
        <end position="167"/>
    </location>
    <ligand>
        <name>NADP(+)</name>
        <dbReference type="ChEBI" id="CHEBI:58349"/>
    </ligand>
</feature>
<feature type="binding site" evidence="1">
    <location>
        <position position="190"/>
    </location>
    <ligand>
        <name>NADP(+)</name>
        <dbReference type="ChEBI" id="CHEBI:58349"/>
    </ligand>
</feature>
<feature type="binding site" evidence="1">
    <location>
        <begin position="216"/>
        <end position="221"/>
    </location>
    <ligand>
        <name>NADP(+)</name>
        <dbReference type="ChEBI" id="CHEBI:58349"/>
    </ligand>
</feature>
<feature type="binding site" evidence="1">
    <location>
        <begin position="269"/>
        <end position="279"/>
    </location>
    <ligand>
        <name>NADP(+)</name>
        <dbReference type="ChEBI" id="CHEBI:58349"/>
    </ligand>
</feature>
<feature type="site" description="Lowers pKa of active site Tyr" evidence="1">
    <location>
        <position position="84"/>
    </location>
</feature>
<keyword id="KW-0963">Cytoplasm</keyword>
<keyword id="KW-0443">Lipid metabolism</keyword>
<keyword id="KW-0521">NADP</keyword>
<keyword id="KW-0560">Oxidoreductase</keyword>
<keyword id="KW-1185">Reference proteome</keyword>
<keyword id="KW-0753">Steroid metabolism</keyword>
<name>AK1CN_HORSE</name>
<proteinExistence type="evidence at protein level"/>
<evidence type="ECO:0000250" key="1"/>
<evidence type="ECO:0000269" key="2">
    <source>
    </source>
</evidence>
<evidence type="ECO:0000305" key="3"/>
<sequence length="322" mass="36672">MDPKGWRVELNDGHFIHALGFGTYAPNEVPKSKAVEATKSAIDAGFRHIDCAHLYDNEKEVGLAIRSKIQDGTVKREDIFCTSKLWATSLRLQLVRPALEKSLKNLQLDYVDLYIIHFPVAVKPGEEHLPQDEQGRMIFDTVDLCATWEAMEKCKDAGLTKSIGVSNFNRRQLEMILNKPGLKHKPVCNQVECHPYLNQSKLLDFCKSKDIVLVAYSALGSQREHWIDQSSPVLLEDPVLCAMAKKYKRTPALIALRYQLQRGVVVLAKSYNEKRIKENVQAFGFQLTSEDMKVLDGLNRNLRYVTLEMFAGHPEYPFSDDY</sequence>
<dbReference type="EC" id="1.1.1.-"/>
<dbReference type="EMBL" id="AY955082">
    <property type="protein sequence ID" value="AAY16444.1"/>
    <property type="molecule type" value="mRNA"/>
</dbReference>
<dbReference type="RefSeq" id="NP_001075377.1">
    <property type="nucleotide sequence ID" value="NM_001081908.1"/>
</dbReference>
<dbReference type="SMR" id="Q1XAA8"/>
<dbReference type="FunCoup" id="Q1XAA8">
    <property type="interactions" value="219"/>
</dbReference>
<dbReference type="PeptideAtlas" id="Q1XAA8"/>
<dbReference type="Ensembl" id="ENSECAT00000072410.2">
    <property type="protein sequence ID" value="ENSECAP00000050430.2"/>
    <property type="gene ID" value="ENSECAG00000037198.3"/>
</dbReference>
<dbReference type="GeneID" id="100034073"/>
<dbReference type="KEGG" id="ecb:100034073"/>
<dbReference type="CTD" id="1645"/>
<dbReference type="GeneTree" id="ENSGT00940000153677"/>
<dbReference type="HOGENOM" id="CLU_023205_0_0_1"/>
<dbReference type="InParanoid" id="Q1XAA8"/>
<dbReference type="OrthoDB" id="416253at2759"/>
<dbReference type="TreeFam" id="TF106492"/>
<dbReference type="BRENDA" id="1.1.1.149">
    <property type="organism ID" value="2120"/>
</dbReference>
<dbReference type="SABIO-RK" id="Q1XAA8"/>
<dbReference type="Proteomes" id="UP000002281">
    <property type="component" value="Chromosome 29"/>
</dbReference>
<dbReference type="GO" id="GO:0005737">
    <property type="term" value="C:cytoplasm"/>
    <property type="evidence" value="ECO:0007669"/>
    <property type="project" value="UniProtKB-SubCell"/>
</dbReference>
<dbReference type="GO" id="GO:0016491">
    <property type="term" value="F:oxidoreductase activity"/>
    <property type="evidence" value="ECO:0007669"/>
    <property type="project" value="UniProtKB-KW"/>
</dbReference>
<dbReference type="GO" id="GO:0008202">
    <property type="term" value="P:steroid metabolic process"/>
    <property type="evidence" value="ECO:0007669"/>
    <property type="project" value="UniProtKB-KW"/>
</dbReference>
<dbReference type="CDD" id="cd19108">
    <property type="entry name" value="AKR_AKR1C1-35"/>
    <property type="match status" value="1"/>
</dbReference>
<dbReference type="FunFam" id="3.20.20.100:FF:000003">
    <property type="entry name" value="Aldo-keto reductase family 1 member C3"/>
    <property type="match status" value="1"/>
</dbReference>
<dbReference type="Gene3D" id="3.20.20.100">
    <property type="entry name" value="NADP-dependent oxidoreductase domain"/>
    <property type="match status" value="1"/>
</dbReference>
<dbReference type="InterPro" id="IPR020471">
    <property type="entry name" value="AKR"/>
</dbReference>
<dbReference type="InterPro" id="IPR044482">
    <property type="entry name" value="AKR1C"/>
</dbReference>
<dbReference type="InterPro" id="IPR018170">
    <property type="entry name" value="Aldo/ket_reductase_CS"/>
</dbReference>
<dbReference type="InterPro" id="IPR023210">
    <property type="entry name" value="NADP_OxRdtase_dom"/>
</dbReference>
<dbReference type="InterPro" id="IPR036812">
    <property type="entry name" value="NADP_OxRdtase_dom_sf"/>
</dbReference>
<dbReference type="PANTHER" id="PTHR11732">
    <property type="entry name" value="ALDO/KETO REDUCTASE"/>
    <property type="match status" value="1"/>
</dbReference>
<dbReference type="Pfam" id="PF00248">
    <property type="entry name" value="Aldo_ket_red"/>
    <property type="match status" value="1"/>
</dbReference>
<dbReference type="PIRSF" id="PIRSF000097">
    <property type="entry name" value="AKR"/>
    <property type="match status" value="1"/>
</dbReference>
<dbReference type="PRINTS" id="PR00069">
    <property type="entry name" value="ALDKETRDTASE"/>
</dbReference>
<dbReference type="SUPFAM" id="SSF51430">
    <property type="entry name" value="NAD(P)-linked oxidoreductase"/>
    <property type="match status" value="1"/>
</dbReference>
<dbReference type="PROSITE" id="PS00798">
    <property type="entry name" value="ALDOKETO_REDUCTASE_1"/>
    <property type="match status" value="1"/>
</dbReference>
<dbReference type="PROSITE" id="PS00062">
    <property type="entry name" value="ALDOKETO_REDUCTASE_2"/>
    <property type="match status" value="1"/>
</dbReference>
<dbReference type="PROSITE" id="PS00063">
    <property type="entry name" value="ALDOKETO_REDUCTASE_3"/>
    <property type="match status" value="1"/>
</dbReference>
<reference key="1">
    <citation type="journal article" date="2006" name="J. Mol. Endocrinol.">
        <title>Human chorionic gonadotropin-dependent induction of an equine aldo-keto reductase (AKR1C23) with 20alpha-hydroxysteroid dehydrogenase activity during follicular luteinization in vivo.</title>
        <authorList>
            <person name="Brown K.A."/>
            <person name="Boerboom D."/>
            <person name="Bouchard N."/>
            <person name="Dore M."/>
            <person name="Lussier J.G."/>
            <person name="Sirois J."/>
        </authorList>
    </citation>
    <scope>NUCLEOTIDE SEQUENCE [MRNA]</scope>
    <scope>FUNCTION</scope>
    <scope>INDUCTION</scope>
    <scope>BIOPHYSICOCHEMICAL PROPERTIES</scope>
    <scope>TISSUE SPECIFICITY</scope>
    <source>
        <tissue>Ovary</tissue>
    </source>
</reference>
<protein>
    <recommendedName>
        <fullName>Aldo-keto reductase family 1 member C23</fullName>
        <ecNumber>1.1.1.-</ecNumber>
    </recommendedName>
</protein>
<organism>
    <name type="scientific">Equus caballus</name>
    <name type="common">Horse</name>
    <dbReference type="NCBI Taxonomy" id="9796"/>
    <lineage>
        <taxon>Eukaryota</taxon>
        <taxon>Metazoa</taxon>
        <taxon>Chordata</taxon>
        <taxon>Craniata</taxon>
        <taxon>Vertebrata</taxon>
        <taxon>Euteleostomi</taxon>
        <taxon>Mammalia</taxon>
        <taxon>Eutheria</taxon>
        <taxon>Laurasiatheria</taxon>
        <taxon>Perissodactyla</taxon>
        <taxon>Equidae</taxon>
        <taxon>Equus</taxon>
    </lineage>
</organism>
<gene>
    <name type="primary">AKR1C23</name>
</gene>
<comment type="function">
    <text evidence="2">NADP-dependent oxidoreductase that has 20-alpha-hydroxysteroid dehydrogenase activity.</text>
</comment>
<comment type="biophysicochemical properties">
    <kinetics>
        <KM evidence="2">3.12 uM for progesterone</KM>
        <Vmax evidence="2">0.086 pmol/min/ug enzyme</Vmax>
    </kinetics>
</comment>
<comment type="subunit">
    <text evidence="1">Monomer.</text>
</comment>
<comment type="subcellular location">
    <subcellularLocation>
        <location evidence="1">Cytoplasm</location>
    </subcellularLocation>
</comment>
<comment type="tissue specificity">
    <text evidence="2">Detected in follicle granulosa cells (at protein level). Detected in heart, lung, liver, kidney, stomach, uterus, testis, skeletal muscle and granulosa cells of the follicle wall.</text>
</comment>
<comment type="induction">
    <text evidence="2">Detected at low levels in preovulatory follicles. Up-regulated in preovulatory follicles during luteinization 12 to 36 hours after stimulation with human chorionic gonadotropin. Up-regulated in granulosa cells 12 to 39 hours after stimulation with human chorionic gonadotropin. Detected at low levels in corpora lutea. Detected at constant low levels in theca interna.</text>
</comment>
<comment type="similarity">
    <text evidence="3">Belongs to the aldo/keto reductase family.</text>
</comment>
<accession>Q1XAA8</accession>